<sequence>MSILLYFIALLSLIIIKKIKDSNRNLPPSPLKLPVIGNLYQLRGLFHKCLHDLSKKHGPVLLLRLGFLDMVVISSTEAAEEALKVHDLECCTRPITNVTSKLWRDGQDIGLAPYGESLRELRKLSFLKFFSTTKVRSFRYIREEENDLMVKKLKEAALKKSSVDLSQTLFGLVGSIIFRSAFGQRFDEGNHVNAEKIEDLMFEVQKLGALSNSDLFPGGLGWFVDFVSGHNKKLHKVFVEVDTLLNHIIDDHLKNSIEEITHDRPDIIDSLLDMIRKQEQGDSFKLTIDNLKGIIQDIYLAGVDTSAITMIWAMAELVKNPRVMKKVQDEIRTCIGIKQNEKIEEDDVDKLQYLKLVVKETLRLHPAAPLLLPRETMSQIKIQGYNIPSKTILLVNVWSIGRDPKHWKNPEEFNPERFIDCPIDYKGNSFEMLPFGSGRRICPGIAFAIATVELGLLNLLYHFDWRLPEEDKDLDMEEAGDVTIIKKVPLKLVPVLHH</sequence>
<protein>
    <recommendedName>
        <fullName>Cytochrome P450 71B24</fullName>
        <ecNumber>1.14.-.-</ecNumber>
    </recommendedName>
</protein>
<proteinExistence type="evidence at transcript level"/>
<gene>
    <name type="primary">CYP71B24</name>
    <name type="ordered locus">At3g26230</name>
    <name type="ORF">MTC11.14</name>
</gene>
<evidence type="ECO:0000250" key="1"/>
<evidence type="ECO:0000255" key="2"/>
<evidence type="ECO:0000305" key="3"/>
<keyword id="KW-0349">Heme</keyword>
<keyword id="KW-0408">Iron</keyword>
<keyword id="KW-0472">Membrane</keyword>
<keyword id="KW-0479">Metal-binding</keyword>
<keyword id="KW-0503">Monooxygenase</keyword>
<keyword id="KW-0560">Oxidoreductase</keyword>
<keyword id="KW-1185">Reference proteome</keyword>
<keyword id="KW-0812">Transmembrane</keyword>
<keyword id="KW-1133">Transmembrane helix</keyword>
<feature type="chain" id="PRO_0000052101" description="Cytochrome P450 71B24">
    <location>
        <begin position="1"/>
        <end position="498"/>
    </location>
</feature>
<feature type="transmembrane region" description="Helical" evidence="2">
    <location>
        <begin position="1"/>
        <end position="21"/>
    </location>
</feature>
<feature type="binding site" description="axial binding residue" evidence="1">
    <location>
        <position position="442"/>
    </location>
    <ligand>
        <name>heme</name>
        <dbReference type="ChEBI" id="CHEBI:30413"/>
    </ligand>
    <ligandPart>
        <name>Fe</name>
        <dbReference type="ChEBI" id="CHEBI:18248"/>
    </ligandPart>
</feature>
<accession>Q9LTL8</accession>
<accession>Q0WVF2</accession>
<dbReference type="EC" id="1.14.-.-"/>
<dbReference type="EMBL" id="AB024038">
    <property type="protein sequence ID" value="BAB02444.1"/>
    <property type="molecule type" value="Genomic_DNA"/>
</dbReference>
<dbReference type="EMBL" id="CP002686">
    <property type="protein sequence ID" value="AEE77136.1"/>
    <property type="molecule type" value="Genomic_DNA"/>
</dbReference>
<dbReference type="EMBL" id="AK226798">
    <property type="protein sequence ID" value="BAE98896.1"/>
    <property type="molecule type" value="mRNA"/>
</dbReference>
<dbReference type="RefSeq" id="NP_189254.1">
    <property type="nucleotide sequence ID" value="NM_113530.4"/>
</dbReference>
<dbReference type="SMR" id="Q9LTL8"/>
<dbReference type="FunCoup" id="Q9LTL8">
    <property type="interactions" value="254"/>
</dbReference>
<dbReference type="STRING" id="3702.Q9LTL8"/>
<dbReference type="PaxDb" id="3702-AT3G26230.1"/>
<dbReference type="ProteomicsDB" id="239170"/>
<dbReference type="EnsemblPlants" id="AT3G26230.1">
    <property type="protein sequence ID" value="AT3G26230.1"/>
    <property type="gene ID" value="AT3G26230"/>
</dbReference>
<dbReference type="GeneID" id="822224"/>
<dbReference type="Gramene" id="AT3G26230.1">
    <property type="protein sequence ID" value="AT3G26230.1"/>
    <property type="gene ID" value="AT3G26230"/>
</dbReference>
<dbReference type="KEGG" id="ath:AT3G26230"/>
<dbReference type="Araport" id="AT3G26230"/>
<dbReference type="TAIR" id="AT3G26230">
    <property type="gene designation" value="CYP71B24"/>
</dbReference>
<dbReference type="eggNOG" id="KOG0156">
    <property type="taxonomic scope" value="Eukaryota"/>
</dbReference>
<dbReference type="HOGENOM" id="CLU_001570_4_1_1"/>
<dbReference type="InParanoid" id="Q9LTL8"/>
<dbReference type="OMA" id="QELYCLA"/>
<dbReference type="PhylomeDB" id="Q9LTL8"/>
<dbReference type="BioCyc" id="ARA:AT3G26230-MONOMER"/>
<dbReference type="PRO" id="PR:Q9LTL8"/>
<dbReference type="Proteomes" id="UP000006548">
    <property type="component" value="Chromosome 3"/>
</dbReference>
<dbReference type="ExpressionAtlas" id="Q9LTL8">
    <property type="expression patterns" value="baseline and differential"/>
</dbReference>
<dbReference type="GO" id="GO:0016020">
    <property type="term" value="C:membrane"/>
    <property type="evidence" value="ECO:0007669"/>
    <property type="project" value="UniProtKB-SubCell"/>
</dbReference>
<dbReference type="GO" id="GO:0020037">
    <property type="term" value="F:heme binding"/>
    <property type="evidence" value="ECO:0007669"/>
    <property type="project" value="InterPro"/>
</dbReference>
<dbReference type="GO" id="GO:0005506">
    <property type="term" value="F:iron ion binding"/>
    <property type="evidence" value="ECO:0007669"/>
    <property type="project" value="InterPro"/>
</dbReference>
<dbReference type="GO" id="GO:0004497">
    <property type="term" value="F:monooxygenase activity"/>
    <property type="evidence" value="ECO:0007669"/>
    <property type="project" value="UniProtKB-KW"/>
</dbReference>
<dbReference type="GO" id="GO:0016705">
    <property type="term" value="F:oxidoreductase activity, acting on paired donors, with incorporation or reduction of molecular oxygen"/>
    <property type="evidence" value="ECO:0007669"/>
    <property type="project" value="InterPro"/>
</dbReference>
<dbReference type="CDD" id="cd11072">
    <property type="entry name" value="CYP71-like"/>
    <property type="match status" value="1"/>
</dbReference>
<dbReference type="FunFam" id="1.10.630.10:FF:000011">
    <property type="entry name" value="Cytochrome P450 83B1"/>
    <property type="match status" value="1"/>
</dbReference>
<dbReference type="Gene3D" id="1.10.630.10">
    <property type="entry name" value="Cytochrome P450"/>
    <property type="match status" value="1"/>
</dbReference>
<dbReference type="InterPro" id="IPR001128">
    <property type="entry name" value="Cyt_P450"/>
</dbReference>
<dbReference type="InterPro" id="IPR017972">
    <property type="entry name" value="Cyt_P450_CS"/>
</dbReference>
<dbReference type="InterPro" id="IPR002401">
    <property type="entry name" value="Cyt_P450_E_grp-I"/>
</dbReference>
<dbReference type="InterPro" id="IPR036396">
    <property type="entry name" value="Cyt_P450_sf"/>
</dbReference>
<dbReference type="PANTHER" id="PTHR47955:SF19">
    <property type="entry name" value="CYTOCHROME P450 71A9-LIKE ISOFORM X1"/>
    <property type="match status" value="1"/>
</dbReference>
<dbReference type="PANTHER" id="PTHR47955">
    <property type="entry name" value="CYTOCHROME P450 FAMILY 71 PROTEIN"/>
    <property type="match status" value="1"/>
</dbReference>
<dbReference type="Pfam" id="PF00067">
    <property type="entry name" value="p450"/>
    <property type="match status" value="1"/>
</dbReference>
<dbReference type="PRINTS" id="PR00463">
    <property type="entry name" value="EP450I"/>
</dbReference>
<dbReference type="PRINTS" id="PR00385">
    <property type="entry name" value="P450"/>
</dbReference>
<dbReference type="SUPFAM" id="SSF48264">
    <property type="entry name" value="Cytochrome P450"/>
    <property type="match status" value="1"/>
</dbReference>
<dbReference type="PROSITE" id="PS00086">
    <property type="entry name" value="CYTOCHROME_P450"/>
    <property type="match status" value="1"/>
</dbReference>
<comment type="cofactor">
    <cofactor evidence="1">
        <name>heme</name>
        <dbReference type="ChEBI" id="CHEBI:30413"/>
    </cofactor>
</comment>
<comment type="subcellular location">
    <subcellularLocation>
        <location evidence="3">Membrane</location>
        <topology evidence="3">Single-pass membrane protein</topology>
    </subcellularLocation>
</comment>
<comment type="similarity">
    <text evidence="3">Belongs to the cytochrome P450 family.</text>
</comment>
<reference key="1">
    <citation type="journal article" date="2000" name="DNA Res.">
        <title>Structural analysis of Arabidopsis thaliana chromosome 3. I. Sequence features of the regions of 4,504,864 bp covered by sixty P1 and TAC clones.</title>
        <authorList>
            <person name="Sato S."/>
            <person name="Nakamura Y."/>
            <person name="Kaneko T."/>
            <person name="Katoh T."/>
            <person name="Asamizu E."/>
            <person name="Tabata S."/>
        </authorList>
    </citation>
    <scope>NUCLEOTIDE SEQUENCE [LARGE SCALE GENOMIC DNA]</scope>
    <source>
        <strain>cv. Columbia</strain>
    </source>
</reference>
<reference key="2">
    <citation type="journal article" date="2017" name="Plant J.">
        <title>Araport11: a complete reannotation of the Arabidopsis thaliana reference genome.</title>
        <authorList>
            <person name="Cheng C.Y."/>
            <person name="Krishnakumar V."/>
            <person name="Chan A.P."/>
            <person name="Thibaud-Nissen F."/>
            <person name="Schobel S."/>
            <person name="Town C.D."/>
        </authorList>
    </citation>
    <scope>GENOME REANNOTATION</scope>
    <source>
        <strain>cv. Columbia</strain>
    </source>
</reference>
<reference key="3">
    <citation type="submission" date="2006-07" db="EMBL/GenBank/DDBJ databases">
        <title>Large-scale analysis of RIKEN Arabidopsis full-length (RAFL) cDNAs.</title>
        <authorList>
            <person name="Totoki Y."/>
            <person name="Seki M."/>
            <person name="Ishida J."/>
            <person name="Nakajima M."/>
            <person name="Enju A."/>
            <person name="Kamiya A."/>
            <person name="Narusaka M."/>
            <person name="Shin-i T."/>
            <person name="Nakagawa M."/>
            <person name="Sakamoto N."/>
            <person name="Oishi K."/>
            <person name="Kohara Y."/>
            <person name="Kobayashi M."/>
            <person name="Toyoda A."/>
            <person name="Sakaki Y."/>
            <person name="Sakurai T."/>
            <person name="Iida K."/>
            <person name="Akiyama K."/>
            <person name="Satou M."/>
            <person name="Toyoda T."/>
            <person name="Konagaya A."/>
            <person name="Carninci P."/>
            <person name="Kawai J."/>
            <person name="Hayashizaki Y."/>
            <person name="Shinozaki K."/>
        </authorList>
    </citation>
    <scope>NUCLEOTIDE SEQUENCE [LARGE SCALE MRNA]</scope>
    <source>
        <strain>cv. Columbia</strain>
    </source>
</reference>
<name>C71BO_ARATH</name>
<organism>
    <name type="scientific">Arabidopsis thaliana</name>
    <name type="common">Mouse-ear cress</name>
    <dbReference type="NCBI Taxonomy" id="3702"/>
    <lineage>
        <taxon>Eukaryota</taxon>
        <taxon>Viridiplantae</taxon>
        <taxon>Streptophyta</taxon>
        <taxon>Embryophyta</taxon>
        <taxon>Tracheophyta</taxon>
        <taxon>Spermatophyta</taxon>
        <taxon>Magnoliopsida</taxon>
        <taxon>eudicotyledons</taxon>
        <taxon>Gunneridae</taxon>
        <taxon>Pentapetalae</taxon>
        <taxon>rosids</taxon>
        <taxon>malvids</taxon>
        <taxon>Brassicales</taxon>
        <taxon>Brassicaceae</taxon>
        <taxon>Camelineae</taxon>
        <taxon>Arabidopsis</taxon>
    </lineage>
</organism>